<proteinExistence type="evidence at protein level"/>
<comment type="function">
    <text evidence="1">Catalyzes the phosphorolysis of diverse nucleosides, yielding D-ribose 1-phosphate and the respective free bases. Can use uridine, adenosine, guanosine, cytidine, thymidine, inosine and xanthosine as substrates. Also catalyzes the reverse reactions.</text>
</comment>
<comment type="catalytic activity">
    <reaction evidence="1">
        <text>a purine D-ribonucleoside + phosphate = a purine nucleobase + alpha-D-ribose 1-phosphate</text>
        <dbReference type="Rhea" id="RHEA:19805"/>
        <dbReference type="ChEBI" id="CHEBI:26386"/>
        <dbReference type="ChEBI" id="CHEBI:43474"/>
        <dbReference type="ChEBI" id="CHEBI:57720"/>
        <dbReference type="ChEBI" id="CHEBI:142355"/>
        <dbReference type="EC" id="2.4.2.1"/>
    </reaction>
</comment>
<comment type="catalytic activity">
    <reaction evidence="1">
        <text>adenosine + phosphate = alpha-D-ribose 1-phosphate + adenine</text>
        <dbReference type="Rhea" id="RHEA:27642"/>
        <dbReference type="ChEBI" id="CHEBI:16335"/>
        <dbReference type="ChEBI" id="CHEBI:16708"/>
        <dbReference type="ChEBI" id="CHEBI:43474"/>
        <dbReference type="ChEBI" id="CHEBI:57720"/>
        <dbReference type="EC" id="2.4.2.1"/>
    </reaction>
</comment>
<comment type="catalytic activity">
    <reaction evidence="1">
        <text>cytidine + phosphate = cytosine + alpha-D-ribose 1-phosphate</text>
        <dbReference type="Rhea" id="RHEA:52540"/>
        <dbReference type="ChEBI" id="CHEBI:16040"/>
        <dbReference type="ChEBI" id="CHEBI:17562"/>
        <dbReference type="ChEBI" id="CHEBI:43474"/>
        <dbReference type="ChEBI" id="CHEBI:57720"/>
        <dbReference type="EC" id="2.4.2.2"/>
    </reaction>
</comment>
<comment type="catalytic activity">
    <reaction evidence="1">
        <text>guanosine + phosphate = alpha-D-ribose 1-phosphate + guanine</text>
        <dbReference type="Rhea" id="RHEA:13233"/>
        <dbReference type="ChEBI" id="CHEBI:16235"/>
        <dbReference type="ChEBI" id="CHEBI:16750"/>
        <dbReference type="ChEBI" id="CHEBI:43474"/>
        <dbReference type="ChEBI" id="CHEBI:57720"/>
        <dbReference type="EC" id="2.4.2.1"/>
    </reaction>
</comment>
<comment type="catalytic activity">
    <reaction evidence="1">
        <text>inosine + phosphate = alpha-D-ribose 1-phosphate + hypoxanthine</text>
        <dbReference type="Rhea" id="RHEA:27646"/>
        <dbReference type="ChEBI" id="CHEBI:17368"/>
        <dbReference type="ChEBI" id="CHEBI:17596"/>
        <dbReference type="ChEBI" id="CHEBI:43474"/>
        <dbReference type="ChEBI" id="CHEBI:57720"/>
        <dbReference type="EC" id="2.4.2.1"/>
    </reaction>
</comment>
<comment type="catalytic activity">
    <reaction evidence="1">
        <text>thymidine + phosphate = 2-deoxy-alpha-D-ribose 1-phosphate + thymine</text>
        <dbReference type="Rhea" id="RHEA:16037"/>
        <dbReference type="ChEBI" id="CHEBI:17748"/>
        <dbReference type="ChEBI" id="CHEBI:17821"/>
        <dbReference type="ChEBI" id="CHEBI:43474"/>
        <dbReference type="ChEBI" id="CHEBI:57259"/>
        <dbReference type="EC" id="2.4.2.2"/>
    </reaction>
</comment>
<comment type="catalytic activity">
    <reaction evidence="1">
        <text>uridine + phosphate = alpha-D-ribose 1-phosphate + uracil</text>
        <dbReference type="Rhea" id="RHEA:24388"/>
        <dbReference type="ChEBI" id="CHEBI:16704"/>
        <dbReference type="ChEBI" id="CHEBI:17568"/>
        <dbReference type="ChEBI" id="CHEBI:43474"/>
        <dbReference type="ChEBI" id="CHEBI:57720"/>
        <dbReference type="EC" id="2.4.2.2"/>
    </reaction>
</comment>
<comment type="catalytic activity">
    <reaction evidence="1">
        <text>xanthosine + phosphate = alpha-D-ribose 1-phosphate + xanthine</text>
        <dbReference type="Rhea" id="RHEA:27638"/>
        <dbReference type="ChEBI" id="CHEBI:17712"/>
        <dbReference type="ChEBI" id="CHEBI:18107"/>
        <dbReference type="ChEBI" id="CHEBI:43474"/>
        <dbReference type="ChEBI" id="CHEBI:57720"/>
        <dbReference type="EC" id="2.4.2.1"/>
    </reaction>
</comment>
<comment type="similarity">
    <text evidence="1">Belongs to the nucleoside phosphorylase PpnP family.</text>
</comment>
<accession>Q6FF51</accession>
<organism>
    <name type="scientific">Acinetobacter baylyi (strain ATCC 33305 / BD413 / ADP1)</name>
    <dbReference type="NCBI Taxonomy" id="62977"/>
    <lineage>
        <taxon>Bacteria</taxon>
        <taxon>Pseudomonadati</taxon>
        <taxon>Pseudomonadota</taxon>
        <taxon>Gammaproteobacteria</taxon>
        <taxon>Moraxellales</taxon>
        <taxon>Moraxellaceae</taxon>
        <taxon>Acinetobacter</taxon>
    </lineage>
</organism>
<sequence length="108" mass="12073">MSSAQFDHVTVIKKSNVYFGGLCISHTVQFEDGTKKTLGVILPTEQPLTFETHVPERMEIISGECRVKIADSTESELFRAGQSFYVPGNSLFKIETDEVLDYVCHLEG</sequence>
<name>PPNP_ACIAD</name>
<dbReference type="EC" id="2.4.2.1" evidence="1"/>
<dbReference type="EC" id="2.4.2.2" evidence="1"/>
<dbReference type="EMBL" id="CR543861">
    <property type="protein sequence ID" value="CAG67306.1"/>
    <property type="molecule type" value="Genomic_DNA"/>
</dbReference>
<dbReference type="RefSeq" id="WP_004920494.1">
    <property type="nucleotide sequence ID" value="NC_005966.1"/>
</dbReference>
<dbReference type="PDB" id="3HQX">
    <property type="method" value="X-ray"/>
    <property type="resolution" value="1.66 A"/>
    <property type="chains" value="A=1-108"/>
</dbReference>
<dbReference type="PDBsum" id="3HQX"/>
<dbReference type="SMR" id="Q6FF51"/>
<dbReference type="STRING" id="202950.GCA_001485005_00618"/>
<dbReference type="GeneID" id="45232859"/>
<dbReference type="KEGG" id="aci:ACIAD0356"/>
<dbReference type="eggNOG" id="COG3123">
    <property type="taxonomic scope" value="Bacteria"/>
</dbReference>
<dbReference type="HOGENOM" id="CLU_157874_1_0_6"/>
<dbReference type="OrthoDB" id="9793848at2"/>
<dbReference type="BioCyc" id="ASP62977:ACIAD_RS01655-MONOMER"/>
<dbReference type="EvolutionaryTrace" id="Q6FF51"/>
<dbReference type="Proteomes" id="UP000000430">
    <property type="component" value="Chromosome"/>
</dbReference>
<dbReference type="GO" id="GO:0005829">
    <property type="term" value="C:cytosol"/>
    <property type="evidence" value="ECO:0007669"/>
    <property type="project" value="TreeGrafter"/>
</dbReference>
<dbReference type="GO" id="GO:0047975">
    <property type="term" value="F:guanosine phosphorylase activity"/>
    <property type="evidence" value="ECO:0007669"/>
    <property type="project" value="UniProtKB-EC"/>
</dbReference>
<dbReference type="GO" id="GO:0004731">
    <property type="term" value="F:purine-nucleoside phosphorylase activity"/>
    <property type="evidence" value="ECO:0007669"/>
    <property type="project" value="UniProtKB-UniRule"/>
</dbReference>
<dbReference type="GO" id="GO:0009032">
    <property type="term" value="F:thymidine phosphorylase activity"/>
    <property type="evidence" value="ECO:0007669"/>
    <property type="project" value="UniProtKB-EC"/>
</dbReference>
<dbReference type="GO" id="GO:0004850">
    <property type="term" value="F:uridine phosphorylase activity"/>
    <property type="evidence" value="ECO:0007669"/>
    <property type="project" value="UniProtKB-EC"/>
</dbReference>
<dbReference type="CDD" id="cd20296">
    <property type="entry name" value="cupin_PpnP-like"/>
    <property type="match status" value="1"/>
</dbReference>
<dbReference type="Gene3D" id="2.60.120.10">
    <property type="entry name" value="Jelly Rolls"/>
    <property type="match status" value="1"/>
</dbReference>
<dbReference type="HAMAP" id="MF_01537">
    <property type="entry name" value="Nucleos_phosphorylase_PpnP"/>
    <property type="match status" value="1"/>
</dbReference>
<dbReference type="InterPro" id="IPR009664">
    <property type="entry name" value="Ppnp"/>
</dbReference>
<dbReference type="InterPro" id="IPR014710">
    <property type="entry name" value="RmlC-like_jellyroll"/>
</dbReference>
<dbReference type="InterPro" id="IPR011051">
    <property type="entry name" value="RmlC_Cupin_sf"/>
</dbReference>
<dbReference type="PANTHER" id="PTHR36540">
    <property type="entry name" value="PYRIMIDINE/PURINE NUCLEOSIDE PHOSPHORYLASE"/>
    <property type="match status" value="1"/>
</dbReference>
<dbReference type="PANTHER" id="PTHR36540:SF1">
    <property type="entry name" value="PYRIMIDINE_PURINE NUCLEOSIDE PHOSPHORYLASE"/>
    <property type="match status" value="1"/>
</dbReference>
<dbReference type="Pfam" id="PF06865">
    <property type="entry name" value="Ppnp"/>
    <property type="match status" value="1"/>
</dbReference>
<dbReference type="SUPFAM" id="SSF51182">
    <property type="entry name" value="RmlC-like cupins"/>
    <property type="match status" value="1"/>
</dbReference>
<reference key="1">
    <citation type="journal article" date="2004" name="Nucleic Acids Res.">
        <title>Unique features revealed by the genome sequence of Acinetobacter sp. ADP1, a versatile and naturally transformation competent bacterium.</title>
        <authorList>
            <person name="Barbe V."/>
            <person name="Vallenet D."/>
            <person name="Fonknechten N."/>
            <person name="Kreimeyer A."/>
            <person name="Oztas S."/>
            <person name="Labarre L."/>
            <person name="Cruveiller S."/>
            <person name="Robert C."/>
            <person name="Duprat S."/>
            <person name="Wincker P."/>
            <person name="Ornston L.N."/>
            <person name="Weissenbach J."/>
            <person name="Marliere P."/>
            <person name="Cohen G.N."/>
            <person name="Medigue C."/>
        </authorList>
    </citation>
    <scope>NUCLEOTIDE SEQUENCE [LARGE SCALE GENOMIC DNA]</scope>
    <source>
        <strain>ATCC 33305 / BD413 / ADP1</strain>
    </source>
</reference>
<keyword id="KW-0002">3D-structure</keyword>
<keyword id="KW-0328">Glycosyltransferase</keyword>
<keyword id="KW-0808">Transferase</keyword>
<evidence type="ECO:0000255" key="1">
    <source>
        <dbReference type="HAMAP-Rule" id="MF_01537"/>
    </source>
</evidence>
<evidence type="ECO:0007829" key="2">
    <source>
        <dbReference type="PDB" id="3HQX"/>
    </source>
</evidence>
<protein>
    <recommendedName>
        <fullName evidence="1">Pyrimidine/purine nucleoside phosphorylase</fullName>
        <ecNumber evidence="1">2.4.2.1</ecNumber>
        <ecNumber evidence="1">2.4.2.2</ecNumber>
    </recommendedName>
    <alternativeName>
        <fullName evidence="1">Adenosine phosphorylase</fullName>
    </alternativeName>
    <alternativeName>
        <fullName evidence="1">Cytidine phosphorylase</fullName>
    </alternativeName>
    <alternativeName>
        <fullName evidence="1">Guanosine phosphorylase</fullName>
    </alternativeName>
    <alternativeName>
        <fullName evidence="1">Inosine phosphorylase</fullName>
    </alternativeName>
    <alternativeName>
        <fullName evidence="1">Thymidine phosphorylase</fullName>
    </alternativeName>
    <alternativeName>
        <fullName evidence="1">Uridine phosphorylase</fullName>
    </alternativeName>
    <alternativeName>
        <fullName evidence="1">Xanthosine phosphorylase</fullName>
    </alternativeName>
</protein>
<gene>
    <name evidence="1" type="primary">ppnP</name>
    <name type="ordered locus">ACIAD0356</name>
</gene>
<feature type="chain" id="PRO_0000211761" description="Pyrimidine/purine nucleoside phosphorylase">
    <location>
        <begin position="1"/>
        <end position="108"/>
    </location>
</feature>
<feature type="strand" evidence="2">
    <location>
        <begin position="16"/>
        <end position="18"/>
    </location>
</feature>
<feature type="turn" evidence="2">
    <location>
        <begin position="19"/>
        <end position="22"/>
    </location>
</feature>
<feature type="strand" evidence="2">
    <location>
        <begin position="23"/>
        <end position="29"/>
    </location>
</feature>
<feature type="strand" evidence="2">
    <location>
        <begin position="35"/>
        <end position="41"/>
    </location>
</feature>
<feature type="strand" evidence="2">
    <location>
        <begin position="48"/>
        <end position="51"/>
    </location>
</feature>
<feature type="strand" evidence="2">
    <location>
        <begin position="56"/>
        <end position="69"/>
    </location>
</feature>
<feature type="strand" evidence="2">
    <location>
        <begin position="76"/>
        <end position="79"/>
    </location>
</feature>
<feature type="strand" evidence="2">
    <location>
        <begin position="83"/>
        <end position="86"/>
    </location>
</feature>
<feature type="strand" evidence="2">
    <location>
        <begin position="91"/>
        <end position="95"/>
    </location>
</feature>
<feature type="strand" evidence="2">
    <location>
        <begin position="100"/>
        <end position="106"/>
    </location>
</feature>